<proteinExistence type="inferred from homology"/>
<dbReference type="EMBL" id="CP000468">
    <property type="protein sequence ID" value="ABJ02553.1"/>
    <property type="molecule type" value="Genomic_DNA"/>
</dbReference>
<dbReference type="RefSeq" id="WP_000511506.1">
    <property type="nucleotide sequence ID" value="NZ_CADILS010000120.1"/>
</dbReference>
<dbReference type="KEGG" id="ecv:APECO1_3373"/>
<dbReference type="HOGENOM" id="CLU_090583_1_0_6"/>
<dbReference type="Proteomes" id="UP000008216">
    <property type="component" value="Chromosome"/>
</dbReference>
<dbReference type="GO" id="GO:0005886">
    <property type="term" value="C:plasma membrane"/>
    <property type="evidence" value="ECO:0007669"/>
    <property type="project" value="UniProtKB-SubCell"/>
</dbReference>
<dbReference type="GO" id="GO:0015035">
    <property type="term" value="F:protein-disulfide reductase activity"/>
    <property type="evidence" value="ECO:0007669"/>
    <property type="project" value="UniProtKB-UniRule"/>
</dbReference>
<dbReference type="GO" id="GO:0006457">
    <property type="term" value="P:protein folding"/>
    <property type="evidence" value="ECO:0007669"/>
    <property type="project" value="InterPro"/>
</dbReference>
<dbReference type="Gene3D" id="1.20.1550.10">
    <property type="entry name" value="DsbB-like"/>
    <property type="match status" value="1"/>
</dbReference>
<dbReference type="HAMAP" id="MF_01311">
    <property type="entry name" value="DsbI"/>
    <property type="match status" value="1"/>
</dbReference>
<dbReference type="InterPro" id="IPR003752">
    <property type="entry name" value="DiS_bond_form_DsbB/BdbC"/>
</dbReference>
<dbReference type="InterPro" id="IPR023792">
    <property type="entry name" value="DiS_OxRdtase_Dsbl"/>
</dbReference>
<dbReference type="InterPro" id="IPR050183">
    <property type="entry name" value="DsbB"/>
</dbReference>
<dbReference type="InterPro" id="IPR023380">
    <property type="entry name" value="DsbB-like_sf"/>
</dbReference>
<dbReference type="NCBIfam" id="NF003304">
    <property type="entry name" value="PRK04307.1"/>
    <property type="match status" value="1"/>
</dbReference>
<dbReference type="PANTHER" id="PTHR36570">
    <property type="entry name" value="DISULFIDE BOND FORMATION PROTEIN B"/>
    <property type="match status" value="1"/>
</dbReference>
<dbReference type="PANTHER" id="PTHR36570:SF1">
    <property type="entry name" value="PROTEIN-DISULFIDE OXIDOREDUCTASE DSBI"/>
    <property type="match status" value="1"/>
</dbReference>
<dbReference type="Pfam" id="PF02600">
    <property type="entry name" value="DsbB"/>
    <property type="match status" value="1"/>
</dbReference>
<dbReference type="SUPFAM" id="SSF158442">
    <property type="entry name" value="DsbB-like"/>
    <property type="match status" value="1"/>
</dbReference>
<name>DSBI_ECOK1</name>
<organism>
    <name type="scientific">Escherichia coli O1:K1 / APEC</name>
    <dbReference type="NCBI Taxonomy" id="405955"/>
    <lineage>
        <taxon>Bacteria</taxon>
        <taxon>Pseudomonadati</taxon>
        <taxon>Pseudomonadota</taxon>
        <taxon>Gammaproteobacteria</taxon>
        <taxon>Enterobacterales</taxon>
        <taxon>Enterobacteriaceae</taxon>
        <taxon>Escherichia</taxon>
    </lineage>
</organism>
<keyword id="KW-0997">Cell inner membrane</keyword>
<keyword id="KW-1003">Cell membrane</keyword>
<keyword id="KW-1015">Disulfide bond</keyword>
<keyword id="KW-0249">Electron transport</keyword>
<keyword id="KW-0472">Membrane</keyword>
<keyword id="KW-0560">Oxidoreductase</keyword>
<keyword id="KW-0676">Redox-active center</keyword>
<keyword id="KW-1185">Reference proteome</keyword>
<keyword id="KW-0812">Transmembrane</keyword>
<keyword id="KW-1133">Transmembrane helix</keyword>
<keyword id="KW-0813">Transport</keyword>
<feature type="chain" id="PRO_0000295643" description="Protein-disulfide oxidoreductase DsbI">
    <location>
        <begin position="1"/>
        <end position="223"/>
    </location>
</feature>
<feature type="transmembrane region" description="Helical" evidence="1">
    <location>
        <begin position="26"/>
        <end position="46"/>
    </location>
</feature>
<feature type="transmembrane region" description="Helical" evidence="1">
    <location>
        <begin position="59"/>
        <end position="78"/>
    </location>
</feature>
<feature type="transmembrane region" description="Helical" evidence="1">
    <location>
        <begin position="82"/>
        <end position="102"/>
    </location>
</feature>
<feature type="transmembrane region" description="Helical" evidence="1">
    <location>
        <begin position="198"/>
        <end position="218"/>
    </location>
</feature>
<feature type="disulfide bond" description="Redox-active" evidence="1">
    <location>
        <begin position="55"/>
        <end position="58"/>
    </location>
</feature>
<feature type="disulfide bond" description="Redox-active" evidence="1">
    <location>
        <begin position="127"/>
        <end position="153"/>
    </location>
</feature>
<sequence>MGIKGMWKDLRTSPVDTLVRWQEQRLLWLLMAVAMGALIILAHSFFQIYLYMAPCEQCVYIRYAMFVMVIGGLVAAINPKNIILKLIGCVMAFYGSILGLKFSLKLNDIHHAVHNPDPDSLFGVQGCSTDPTFPFNLPLAQWAPNWFKPTGDCGYDAPIVPDGVTLSSTQQWFVEMYQQSEGWYLLPPWHFMNMAQACMLAFGMCLVLLVIMSGAWALKIIRG</sequence>
<protein>
    <recommendedName>
        <fullName evidence="1">Protein-disulfide oxidoreductase DsbI</fullName>
    </recommendedName>
</protein>
<accession>A1AFW3</accession>
<reference key="1">
    <citation type="journal article" date="2007" name="J. Bacteriol.">
        <title>The genome sequence of avian pathogenic Escherichia coli strain O1:K1:H7 shares strong similarities with human extraintestinal pathogenic E. coli genomes.</title>
        <authorList>
            <person name="Johnson T.J."/>
            <person name="Kariyawasam S."/>
            <person name="Wannemuehler Y."/>
            <person name="Mangiamele P."/>
            <person name="Johnson S.J."/>
            <person name="Doetkott C."/>
            <person name="Skyberg J.A."/>
            <person name="Lynne A.M."/>
            <person name="Johnson J.R."/>
            <person name="Nolan L.K."/>
        </authorList>
    </citation>
    <scope>NUCLEOTIDE SEQUENCE [LARGE SCALE GENOMIC DNA]</scope>
</reference>
<evidence type="ECO:0000255" key="1">
    <source>
        <dbReference type="HAMAP-Rule" id="MF_01311"/>
    </source>
</evidence>
<gene>
    <name evidence="1" type="primary">dsbI</name>
    <name type="ordered locus">Ecok1_30590</name>
    <name type="ORF">APECO1_3373</name>
</gene>
<comment type="function">
    <text evidence="1">Required for disulfide bond formation in some proteins. Part of a redox system composed of DsbI and DsbL that mediates formation of an essential disulfide bond in AssT.</text>
</comment>
<comment type="subunit">
    <text evidence="1">Interacts with DsbL.</text>
</comment>
<comment type="subcellular location">
    <subcellularLocation>
        <location evidence="1">Cell inner membrane</location>
        <topology evidence="1">Multi-pass membrane protein</topology>
    </subcellularLocation>
</comment>
<comment type="similarity">
    <text evidence="1">Belongs to the DsbB family. DsbI subfamily.</text>
</comment>